<comment type="function">
    <text>Spectrin is the major constituent of the cytoskeletal network underlying the erythrocyte plasma membrane. It associates with band 4.1 and actin to form the cytoskeletal superstructure of the erythrocyte plasma membrane.</text>
</comment>
<comment type="subunit">
    <text evidence="1">Composed of nonhomologous chains, alpha and beta, which aggregate to form dimers, tetramers, and higher polymers. Interacts with BCAM (By similarity).</text>
</comment>
<comment type="subcellular location">
    <subcellularLocation>
        <location>Cytoplasm</location>
        <location>Cytoskeleton</location>
    </subcellularLocation>
    <subcellularLocation>
        <location>Cytoplasm</location>
        <location>Cell cortex</location>
    </subcellularLocation>
</comment>
<comment type="miscellaneous">
    <text>This complex is anchored to the cytoplasmic face of the plasma membrane via another protein, ankyrin, which binds to beta-spectrin and mediates the binding of the whole complex to a transmembrane protein band 3. The interaction of erythrocyte spectrin with other proteins through specific binding domains lead to the formation of an extensive subplasmalemmal meshwork which is thought to be responsible for the maintenance of the biconcave shape of human erythrocytes, for the regulation of plasma membrane components and for the maintenance of the lipid asymmetry of the plasma membrane.</text>
</comment>
<comment type="similarity">
    <text evidence="5">Belongs to the spectrin family.</text>
</comment>
<evidence type="ECO:0000250" key="1">
    <source>
        <dbReference type="UniProtKB" id="P11277"/>
    </source>
</evidence>
<evidence type="ECO:0000255" key="2"/>
<evidence type="ECO:0000255" key="3">
    <source>
        <dbReference type="PROSITE-ProRule" id="PRU00044"/>
    </source>
</evidence>
<evidence type="ECO:0000256" key="4">
    <source>
        <dbReference type="SAM" id="MobiDB-lite"/>
    </source>
</evidence>
<evidence type="ECO:0000305" key="5"/>
<evidence type="ECO:0007744" key="6">
    <source>
    </source>
</evidence>
<dbReference type="EMBL" id="S66283">
    <property type="protein sequence ID" value="AAB28600.1"/>
    <property type="molecule type" value="mRNA"/>
</dbReference>
<dbReference type="EMBL" id="M18641">
    <property type="protein sequence ID" value="AAA40126.1"/>
    <property type="molecule type" value="mRNA"/>
</dbReference>
<dbReference type="PIR" id="A45929">
    <property type="entry name" value="A45929"/>
</dbReference>
<dbReference type="SMR" id="P15508"/>
<dbReference type="FunCoup" id="P15508">
    <property type="interactions" value="28"/>
</dbReference>
<dbReference type="IntAct" id="P15508">
    <property type="interactions" value="3"/>
</dbReference>
<dbReference type="MINT" id="P15508"/>
<dbReference type="STRING" id="10090.ENSMUSP00000021458"/>
<dbReference type="GlyGen" id="P15508">
    <property type="glycosylation" value="4 sites, 3 N-linked glycans (3 sites), 1 O-linked glycan (1 site)"/>
</dbReference>
<dbReference type="iPTMnet" id="P15508"/>
<dbReference type="PhosphoSitePlus" id="P15508"/>
<dbReference type="jPOST" id="P15508"/>
<dbReference type="PaxDb" id="10090-ENSMUSP00000021458"/>
<dbReference type="PeptideAtlas" id="P15508"/>
<dbReference type="ProteomicsDB" id="261641"/>
<dbReference type="ABCD" id="P15508">
    <property type="antibodies" value="1 sequenced antibody"/>
</dbReference>
<dbReference type="AGR" id="MGI:98387"/>
<dbReference type="MGI" id="MGI:98387">
    <property type="gene designation" value="Sptb"/>
</dbReference>
<dbReference type="eggNOG" id="KOG0517">
    <property type="taxonomic scope" value="Eukaryota"/>
</dbReference>
<dbReference type="InParanoid" id="P15508"/>
<dbReference type="Reactome" id="R-MMU-375165">
    <property type="pathway name" value="NCAM signaling for neurite out-growth"/>
</dbReference>
<dbReference type="Reactome" id="R-MMU-445095">
    <property type="pathway name" value="Interaction between L1 and Ankyrins"/>
</dbReference>
<dbReference type="Reactome" id="R-MMU-5673001">
    <property type="pathway name" value="RAF/MAP kinase cascade"/>
</dbReference>
<dbReference type="Reactome" id="R-MMU-6807878">
    <property type="pathway name" value="COPI-mediated anterograde transport"/>
</dbReference>
<dbReference type="CD-CODE" id="CE726F99">
    <property type="entry name" value="Postsynaptic density"/>
</dbReference>
<dbReference type="ChiTaRS" id="Sptb">
    <property type="organism name" value="mouse"/>
</dbReference>
<dbReference type="PRO" id="PR:P15508"/>
<dbReference type="Proteomes" id="UP000000589">
    <property type="component" value="Unplaced"/>
</dbReference>
<dbReference type="RNAct" id="P15508">
    <property type="molecule type" value="protein"/>
</dbReference>
<dbReference type="GO" id="GO:0030863">
    <property type="term" value="C:cortical cytoskeleton"/>
    <property type="evidence" value="ECO:0000314"/>
    <property type="project" value="MGI"/>
</dbReference>
<dbReference type="GO" id="GO:0016020">
    <property type="term" value="C:membrane"/>
    <property type="evidence" value="ECO:0000314"/>
    <property type="project" value="MGI"/>
</dbReference>
<dbReference type="GO" id="GO:0005886">
    <property type="term" value="C:plasma membrane"/>
    <property type="evidence" value="ECO:0000314"/>
    <property type="project" value="MGI"/>
</dbReference>
<dbReference type="GO" id="GO:0008091">
    <property type="term" value="C:spectrin"/>
    <property type="evidence" value="ECO:0007669"/>
    <property type="project" value="InterPro"/>
</dbReference>
<dbReference type="GO" id="GO:0014731">
    <property type="term" value="C:spectrin-associated cytoskeleton"/>
    <property type="evidence" value="ECO:0000315"/>
    <property type="project" value="MGI"/>
</dbReference>
<dbReference type="GO" id="GO:0003779">
    <property type="term" value="F:actin binding"/>
    <property type="evidence" value="ECO:0000314"/>
    <property type="project" value="MGI"/>
</dbReference>
<dbReference type="GO" id="GO:0051015">
    <property type="term" value="F:actin filament binding"/>
    <property type="evidence" value="ECO:0000314"/>
    <property type="project" value="MGI"/>
</dbReference>
<dbReference type="GO" id="GO:0005200">
    <property type="term" value="F:structural constituent of cytoskeleton"/>
    <property type="evidence" value="ECO:0007669"/>
    <property type="project" value="InterPro"/>
</dbReference>
<dbReference type="GO" id="GO:0051693">
    <property type="term" value="P:actin filament capping"/>
    <property type="evidence" value="ECO:0007669"/>
    <property type="project" value="UniProtKB-KW"/>
</dbReference>
<dbReference type="GO" id="GO:0030097">
    <property type="term" value="P:hemopoiesis"/>
    <property type="evidence" value="ECO:0000315"/>
    <property type="project" value="MGI"/>
</dbReference>
<dbReference type="GO" id="GO:0007009">
    <property type="term" value="P:plasma membrane organization"/>
    <property type="evidence" value="ECO:0000315"/>
    <property type="project" value="MGI"/>
</dbReference>
<dbReference type="GO" id="GO:0006779">
    <property type="term" value="P:porphyrin-containing compound biosynthetic process"/>
    <property type="evidence" value="ECO:0000315"/>
    <property type="project" value="MGI"/>
</dbReference>
<dbReference type="CDD" id="cd21319">
    <property type="entry name" value="CH_SPTB_rpt2"/>
    <property type="match status" value="1"/>
</dbReference>
<dbReference type="CDD" id="cd21317">
    <property type="entry name" value="CH_SPTBN2_rpt1"/>
    <property type="match status" value="1"/>
</dbReference>
<dbReference type="CDD" id="cd00176">
    <property type="entry name" value="SPEC"/>
    <property type="match status" value="9"/>
</dbReference>
<dbReference type="FunFam" id="1.10.418.10:FF:000003">
    <property type="entry name" value="Spectrin beta chain"/>
    <property type="match status" value="1"/>
</dbReference>
<dbReference type="FunFam" id="1.10.418.10:FF:000004">
    <property type="entry name" value="Spectrin beta chain"/>
    <property type="match status" value="1"/>
</dbReference>
<dbReference type="FunFam" id="1.20.58.60:FF:000011">
    <property type="entry name" value="Spectrin beta chain"/>
    <property type="match status" value="1"/>
</dbReference>
<dbReference type="FunFam" id="1.20.58.60:FF:000018">
    <property type="entry name" value="Spectrin beta chain"/>
    <property type="match status" value="1"/>
</dbReference>
<dbReference type="FunFam" id="1.20.58.60:FF:000019">
    <property type="entry name" value="Spectrin beta chain"/>
    <property type="match status" value="1"/>
</dbReference>
<dbReference type="FunFam" id="1.20.58.60:FF:000028">
    <property type="entry name" value="Spectrin beta chain"/>
    <property type="match status" value="1"/>
</dbReference>
<dbReference type="FunFam" id="1.20.58.60:FF:000033">
    <property type="entry name" value="Spectrin beta chain"/>
    <property type="match status" value="1"/>
</dbReference>
<dbReference type="FunFam" id="1.20.58.60:FF:000049">
    <property type="entry name" value="Spectrin beta chain"/>
    <property type="match status" value="1"/>
</dbReference>
<dbReference type="FunFam" id="1.20.58.60:FF:000059">
    <property type="entry name" value="Spectrin beta chain"/>
    <property type="match status" value="1"/>
</dbReference>
<dbReference type="FunFam" id="1.20.58.60:FF:000099">
    <property type="entry name" value="Spectrin beta chain"/>
    <property type="match status" value="1"/>
</dbReference>
<dbReference type="FunFam" id="1.20.58.60:FF:000214">
    <property type="entry name" value="Spectrin beta chain"/>
    <property type="match status" value="1"/>
</dbReference>
<dbReference type="FunFam" id="1.20.58.60:FF:000484">
    <property type="entry name" value="Spectrin beta chain"/>
    <property type="match status" value="1"/>
</dbReference>
<dbReference type="FunFam" id="1.20.58.60:FF:000509">
    <property type="entry name" value="Spectrin beta chain"/>
    <property type="match status" value="1"/>
</dbReference>
<dbReference type="Gene3D" id="1.20.58.60">
    <property type="match status" value="12"/>
</dbReference>
<dbReference type="Gene3D" id="1.10.418.10">
    <property type="entry name" value="Calponin-like domain"/>
    <property type="match status" value="2"/>
</dbReference>
<dbReference type="InterPro" id="IPR001589">
    <property type="entry name" value="Actinin_actin-bd_CS"/>
</dbReference>
<dbReference type="InterPro" id="IPR001715">
    <property type="entry name" value="CH_dom"/>
</dbReference>
<dbReference type="InterPro" id="IPR036872">
    <property type="entry name" value="CH_dom_sf"/>
</dbReference>
<dbReference type="InterPro" id="IPR018159">
    <property type="entry name" value="Spectrin/alpha-actinin"/>
</dbReference>
<dbReference type="InterPro" id="IPR016343">
    <property type="entry name" value="Spectrin_bsu"/>
</dbReference>
<dbReference type="InterPro" id="IPR002017">
    <property type="entry name" value="Spectrin_repeat"/>
</dbReference>
<dbReference type="PANTHER" id="PTHR11915">
    <property type="entry name" value="SPECTRIN/FILAMIN RELATED CYTOSKELETAL PROTEIN"/>
    <property type="match status" value="1"/>
</dbReference>
<dbReference type="Pfam" id="PF00307">
    <property type="entry name" value="CH"/>
    <property type="match status" value="2"/>
</dbReference>
<dbReference type="Pfam" id="PF00435">
    <property type="entry name" value="Spectrin"/>
    <property type="match status" value="17"/>
</dbReference>
<dbReference type="PIRSF" id="PIRSF002297">
    <property type="entry name" value="Spectrin_beta_subunit"/>
    <property type="match status" value="1"/>
</dbReference>
<dbReference type="SMART" id="SM00033">
    <property type="entry name" value="CH"/>
    <property type="match status" value="2"/>
</dbReference>
<dbReference type="SMART" id="SM00150">
    <property type="entry name" value="SPEC"/>
    <property type="match status" value="17"/>
</dbReference>
<dbReference type="SUPFAM" id="SSF47576">
    <property type="entry name" value="Calponin-homology domain, CH-domain"/>
    <property type="match status" value="1"/>
</dbReference>
<dbReference type="SUPFAM" id="SSF46966">
    <property type="entry name" value="Spectrin repeat"/>
    <property type="match status" value="13"/>
</dbReference>
<dbReference type="PROSITE" id="PS00019">
    <property type="entry name" value="ACTININ_1"/>
    <property type="match status" value="1"/>
</dbReference>
<dbReference type="PROSITE" id="PS00020">
    <property type="entry name" value="ACTININ_2"/>
    <property type="match status" value="1"/>
</dbReference>
<dbReference type="PROSITE" id="PS50021">
    <property type="entry name" value="CH"/>
    <property type="match status" value="2"/>
</dbReference>
<gene>
    <name type="primary">Sptb</name>
    <name type="synonym">Spnb-1</name>
    <name type="synonym">Spnb1</name>
    <name type="synonym">Sptb1</name>
</gene>
<proteinExistence type="evidence at protein level"/>
<reference key="1">
    <citation type="journal article" date="1993" name="Blood">
        <title>Complete nucleotide sequence of the murine erythroid beta-spectrin cDNA and tissue-specific expression in normal and jaundiced mice.</title>
        <authorList>
            <person name="Bloom M.L."/>
            <person name="Birkenmeier C.S."/>
            <person name="Barker J.E."/>
        </authorList>
    </citation>
    <scope>NUCLEOTIDE SEQUENCE [MRNA]</scope>
</reference>
<reference key="2">
    <citation type="journal article" date="1987" name="Blood">
        <title>Cloning and nucleotide sequence of a mouse erythrocyte beta-spectrin cDNA.</title>
        <authorList>
            <person name="Cioe L."/>
            <person name="Laurila P."/>
            <person name="Meo P."/>
            <person name="Krebs K."/>
            <person name="Goodman S."/>
            <person name="Curtis P.J."/>
        </authorList>
    </citation>
    <scope>NUCLEOTIDE SEQUENCE [MRNA] OF 1055-1290</scope>
</reference>
<reference key="3">
    <citation type="journal article" date="2006" name="Mol. Cell. Proteomics">
        <title>Comprehensive identification of phosphorylation sites in postsynaptic density preparations.</title>
        <authorList>
            <person name="Trinidad J.C."/>
            <person name="Specht C.G."/>
            <person name="Thalhammer A."/>
            <person name="Schoepfer R."/>
            <person name="Burlingame A.L."/>
        </authorList>
    </citation>
    <scope>IDENTIFICATION BY MASS SPECTROMETRY [LARGE SCALE ANALYSIS]</scope>
    <source>
        <tissue>Brain</tissue>
    </source>
</reference>
<reference key="4">
    <citation type="journal article" date="2007" name="Proc. Natl. Acad. Sci. U.S.A.">
        <title>Large-scale phosphorylation analysis of mouse liver.</title>
        <authorList>
            <person name="Villen J."/>
            <person name="Beausoleil S.A."/>
            <person name="Gerber S.A."/>
            <person name="Gygi S.P."/>
        </authorList>
    </citation>
    <scope>IDENTIFICATION BY MASS SPECTROMETRY [LARGE SCALE ANALYSIS]</scope>
    <source>
        <tissue>Liver</tissue>
    </source>
</reference>
<reference key="5">
    <citation type="journal article" date="2010" name="Cell">
        <title>A tissue-specific atlas of mouse protein phosphorylation and expression.</title>
        <authorList>
            <person name="Huttlin E.L."/>
            <person name="Jedrychowski M.P."/>
            <person name="Elias J.E."/>
            <person name="Goswami T."/>
            <person name="Rad R."/>
            <person name="Beausoleil S.A."/>
            <person name="Villen J."/>
            <person name="Haas W."/>
            <person name="Sowa M.E."/>
            <person name="Gygi S.P."/>
        </authorList>
    </citation>
    <scope>PHOSPHORYLATION [LARGE SCALE ANALYSIS] AT SER-36; SER-1289 AND THR-2072</scope>
    <scope>IDENTIFICATION BY MASS SPECTROMETRY [LARGE SCALE ANALYSIS]</scope>
    <source>
        <tissue>Brain</tissue>
        <tissue>Brown adipose tissue</tissue>
        <tissue>Heart</tissue>
        <tissue>Kidney</tissue>
        <tissue>Liver</tissue>
        <tissue>Lung</tissue>
        <tissue>Spleen</tissue>
        <tissue>Testis</tissue>
    </source>
</reference>
<name>SPTB1_MOUSE</name>
<protein>
    <recommendedName>
        <fullName>Spectrin beta chain, erythrocytic</fullName>
    </recommendedName>
    <alternativeName>
        <fullName>Beta-I spectrin</fullName>
    </alternativeName>
</protein>
<sequence>MTSATEFENVGNQPPFSRINARWDAPDDELDNDNSSARLFERSRIKALADEREVVQKKTFTKWVNSHLARVSCRISDLYKDLRDGRMLIKLLEVLSGEMLPRPTKGKMRIHCLENVDKALQFLKEQRVHLENMGSHDIVDGNHRLVLGLIWTIILRFQIQDIVVQTQEGREQRSAKDALLLWCQMKTAGYPHVNVTNFTSSWKDGLAFNALIHKHRPDLIDFDKLKDSNARHNLEHAFDVAERQLGIIPLLDPEDVFTENPDEKSIITYVVAFYHYFSKMKVLAVEGKRVGKVIDHAIETEKMIEKYSGLASDLLTWIEQTISVLNSRKFANSLSGVQQQLQAFSTYRTVEKPPKFQEKGNLEVLLFTIQSRMRANNQKVYTPHDGKLVSDINRAWESLEEAEYQRELALRSELIRQEFDRKAAMRETWLNENQRLVTQDNFGYDLAAVEAAKKKHEAIETDTAAYEERVKALEDLAQELEKENYHDQKRIIARKDNILRLWSYLQELLRSRRQRLEATLALQKLFQDMLHSIDWMDEIKAHILSAEFGKHLLEVEDLLQKHKLMEADIAIQGDKVKAITAATLQFAEGKGYQPCDPQVIQDRVSHLEQCFSELSNMAAGRKAQLEQSKRLWKFFWEMDEAESWIKEKEQIYSSLDYGKDLTSVLILQRKHKAFEDELRGLDAHLKQIFQEADDMVAQKQFGHPQIETRVKEVSAQWDHLKELAAFRKKDLQDAENFFQFQGDADDLKAWLQDAHRLLSGEDVGQDEGATRALGKKHKEFLEELEESRGVMEHLEHQAQGFPEEFRDSPDVTNRLQALRKLYQQVLTQAELRGHKLQEALDLYTVFGESDACELWMTEKGKWLDQMDIPNTLEDLEVVQHRFDILDQEMKTLMAQIDGVNLAANNLVESGHPRSGEVKQYQDRLNKRWQAFQAVVSEQREAVDSALRVNNYCVDCEETSKWIMDKTKVVESTKDLGQDLAGVIAIQRKLSGLERDVLAIRDRVSALERESQYLMESHPEQKEDIGQRQADVEKLWKGLQDALQGQELSLGEASKLQAFLQDLDDFKAWLSMAQKAVASEDMPESLPEAEQLLQQHAAIKEEIDAHRDDYHRVKASGEKVIEGQTDPDYQLLGQRLEGLDTDWDALRRMWESRGNTLTQCLGFQEFQKDAKQAEAILSNQEYTLAHLEPPDSLAAAEAGIRKFEDFLVSMENNRDKILSPVDSGNKLVAEGNLYSNKIMEKVQLIEDRHKKNNEKAQEATVLLKDNLELQNFLQNCKELTLWINDKLLTSPDVSYDEARNLHNKWMKHQAFMAELASHQGWLENIDAEGRQLMAEKPQFKDVVSERLEALHKLWEELQSTAKAKAEQLSAARSSDLRLQTHADLNKWIGAMEDQLRSDDLGKDLTTVNRMLAKLKRVEEQVNLRKEELEELFADAPSLGAEAGDTDMSIEKRFLDLLEPLGRRKKQLELSKAKLQISRDLEDETLWVEERLPLAQSADYGTNLQTVQLFMKKNQTLQNEILGHAPRVEDVLRRGQELVKAAEIDCQDIEERLGHLQSSWDTLREAAAGRLQRLRDAHEAQQYYLDAGEAEAWISEQELYVFSDEPPKDEEGAIVMLKRHLRQQRTVEEYGRNIKQLAGRAQSLLSAGHPEGEQIIRLQGQVDKQYAGLKDMAEERRRRLENMYHLFQLKREADDLEQWITEKEMVASSQEMGQDFDHVTMLRDKFRDFARETGAIGQERVDNVTIIERLIDAGHSEAATIAEWKDGLNDMWADLLELIDTRMQLLAASYDLHRYFYTGTEILGLIDEKHRELPEDVGLDASTAESFHRVHTAFERELHLLGVQVQQFQDVATRLQTAYAGEKADAIQSKEQEVSAAWQALLDACAGRRAQLVDTADKFRFFSMVRDLLSWMESIIRQIETQERPRDVSSVELLLKYHQGIKAEINTRAKNFSTCLELGESLLQRQHQASDEIREKLQQVISRRQEMNDKWEARSDRLHMLLEVCQFSRDASVAEAWLIAQEPYLASRDFGHTVDSVEKLIKRHEAFEKSTASWAERFAALEKPTTLELKERQTPERPTEEPGPQEEEGETAGEAPQVHHAATERTSPVSFMSRLSSSWESLLPEPAHPF</sequence>
<keyword id="KW-0117">Actin capping</keyword>
<keyword id="KW-0009">Actin-binding</keyword>
<keyword id="KW-0963">Cytoplasm</keyword>
<keyword id="KW-0206">Cytoskeleton</keyword>
<keyword id="KW-0597">Phosphoprotein</keyword>
<keyword id="KW-1185">Reference proteome</keyword>
<keyword id="KW-0677">Repeat</keyword>
<feature type="chain" id="PRO_0000073460" description="Spectrin beta chain, erythrocytic">
    <location>
        <begin position="1"/>
        <end position="2128"/>
    </location>
</feature>
<feature type="domain" description="Calponin-homology (CH) 1" evidence="3">
    <location>
        <begin position="54"/>
        <end position="158"/>
    </location>
</feature>
<feature type="domain" description="Calponin-homology (CH) 2" evidence="3">
    <location>
        <begin position="173"/>
        <end position="278"/>
    </location>
</feature>
<feature type="repeat" description="Spectrin 1" evidence="2">
    <location>
        <begin position="303"/>
        <end position="411"/>
    </location>
</feature>
<feature type="repeat" description="Spectrin 2" evidence="2">
    <location>
        <begin position="416"/>
        <end position="517"/>
    </location>
</feature>
<feature type="repeat" description="Spectrin 3" evidence="2">
    <location>
        <begin position="521"/>
        <end position="627"/>
    </location>
</feature>
<feature type="repeat" description="Spectrin 4" evidence="2">
    <location>
        <begin position="630"/>
        <end position="733"/>
    </location>
</feature>
<feature type="repeat" description="Spectrin 5" evidence="2">
    <location>
        <begin position="736"/>
        <end position="838"/>
    </location>
</feature>
<feature type="repeat" description="Spectrin 6" evidence="2">
    <location>
        <begin position="845"/>
        <end position="942"/>
    </location>
</feature>
<feature type="repeat" description="Spectrin 7" evidence="2">
    <location>
        <begin position="950"/>
        <end position="1050"/>
    </location>
</feature>
<feature type="repeat" description="Spectrin 8" evidence="2">
    <location>
        <begin position="1054"/>
        <end position="1157"/>
    </location>
</feature>
<feature type="repeat" description="Spectrin 9" evidence="2">
    <location>
        <begin position="1162"/>
        <end position="1250"/>
    </location>
</feature>
<feature type="repeat" description="Spectrin 10" evidence="2">
    <location>
        <begin position="1267"/>
        <end position="1368"/>
    </location>
</feature>
<feature type="repeat" description="Spectrin 11" evidence="2">
    <location>
        <begin position="1381"/>
        <end position="1455"/>
    </location>
</feature>
<feature type="repeat" description="Spectrin 12" evidence="2">
    <location>
        <begin position="1473"/>
        <end position="1574"/>
    </location>
</feature>
<feature type="repeat" description="Spectrin 13" evidence="2">
    <location>
        <begin position="1576"/>
        <end position="1680"/>
    </location>
</feature>
<feature type="repeat" description="Spectrin 14" evidence="2">
    <location>
        <begin position="1682"/>
        <end position="1784"/>
    </location>
</feature>
<feature type="repeat" description="Spectrin 15" evidence="2">
    <location>
        <begin position="1789"/>
        <end position="1890"/>
    </location>
</feature>
<feature type="repeat" description="Spectrin 16" evidence="2">
    <location>
        <begin position="1897"/>
        <end position="1997"/>
    </location>
</feature>
<feature type="repeat" description="Spectrin 17" evidence="2">
    <location>
        <begin position="2004"/>
        <end position="2064"/>
    </location>
</feature>
<feature type="region of interest" description="Disordered" evidence="4">
    <location>
        <begin position="1"/>
        <end position="30"/>
    </location>
</feature>
<feature type="region of interest" description="Actin-binding">
    <location>
        <begin position="2"/>
        <end position="275"/>
    </location>
</feature>
<feature type="region of interest" description="Disordered" evidence="4">
    <location>
        <begin position="2062"/>
        <end position="2108"/>
    </location>
</feature>
<feature type="compositionally biased region" description="Polar residues" evidence="4">
    <location>
        <begin position="1"/>
        <end position="15"/>
    </location>
</feature>
<feature type="compositionally biased region" description="Basic and acidic residues" evidence="4">
    <location>
        <begin position="2066"/>
        <end position="2078"/>
    </location>
</feature>
<feature type="modified residue" description="Phosphoserine" evidence="6">
    <location>
        <position position="36"/>
    </location>
</feature>
<feature type="modified residue" description="Phosphothreonine" evidence="1">
    <location>
        <position position="104"/>
    </location>
</feature>
<feature type="modified residue" description="Phosphoserine" evidence="6">
    <location>
        <position position="1289"/>
    </location>
</feature>
<feature type="modified residue" description="Phosphoserine" evidence="1">
    <location>
        <position position="2034"/>
    </location>
</feature>
<feature type="modified residue" description="Phosphothreonine" evidence="1">
    <location>
        <position position="2064"/>
    </location>
</feature>
<feature type="modified residue" description="Phosphothreonine" evidence="6">
    <location>
        <position position="2072"/>
    </location>
</feature>
<feature type="modified residue" description="Phosphothreonine" evidence="1">
    <location>
        <position position="2101"/>
    </location>
</feature>
<feature type="modified residue" description="Phosphoserine" evidence="1">
    <location>
        <position position="2105"/>
    </location>
</feature>
<feature type="modified residue" description="Phosphoserine" evidence="1">
    <location>
        <position position="2108"/>
    </location>
</feature>
<feature type="modified residue" description="Phosphoserine" evidence="1">
    <location>
        <position position="2114"/>
    </location>
</feature>
<feature type="modified residue" description="Phosphoserine" evidence="1">
    <location>
        <position position="2116"/>
    </location>
</feature>
<feature type="modified residue" description="Phosphoserine" evidence="1">
    <location>
        <position position="2119"/>
    </location>
</feature>
<organism>
    <name type="scientific">Mus musculus</name>
    <name type="common">Mouse</name>
    <dbReference type="NCBI Taxonomy" id="10090"/>
    <lineage>
        <taxon>Eukaryota</taxon>
        <taxon>Metazoa</taxon>
        <taxon>Chordata</taxon>
        <taxon>Craniata</taxon>
        <taxon>Vertebrata</taxon>
        <taxon>Euteleostomi</taxon>
        <taxon>Mammalia</taxon>
        <taxon>Eutheria</taxon>
        <taxon>Euarchontoglires</taxon>
        <taxon>Glires</taxon>
        <taxon>Rodentia</taxon>
        <taxon>Myomorpha</taxon>
        <taxon>Muroidea</taxon>
        <taxon>Muridae</taxon>
        <taxon>Murinae</taxon>
        <taxon>Mus</taxon>
        <taxon>Mus</taxon>
    </lineage>
</organism>
<accession>P15508</accession>